<name>EFTS_SACD2</name>
<reference key="1">
    <citation type="journal article" date="2008" name="PLoS Genet.">
        <title>Complete genome sequence of the complex carbohydrate-degrading marine bacterium, Saccharophagus degradans strain 2-40 T.</title>
        <authorList>
            <person name="Weiner R.M."/>
            <person name="Taylor L.E. II"/>
            <person name="Henrissat B."/>
            <person name="Hauser L."/>
            <person name="Land M."/>
            <person name="Coutinho P.M."/>
            <person name="Rancurel C."/>
            <person name="Saunders E.H."/>
            <person name="Longmire A.G."/>
            <person name="Zhang H."/>
            <person name="Bayer E.A."/>
            <person name="Gilbert H.J."/>
            <person name="Larimer F."/>
            <person name="Zhulin I.B."/>
            <person name="Ekborg N.A."/>
            <person name="Lamed R."/>
            <person name="Richardson P.M."/>
            <person name="Borovok I."/>
            <person name="Hutcheson S."/>
        </authorList>
    </citation>
    <scope>NUCLEOTIDE SEQUENCE [LARGE SCALE GENOMIC DNA]</scope>
    <source>
        <strain>2-40 / ATCC 43961 / DSM 17024</strain>
    </source>
</reference>
<proteinExistence type="inferred from homology"/>
<comment type="function">
    <text evidence="1">Associates with the EF-Tu.GDP complex and induces the exchange of GDP to GTP. It remains bound to the aminoacyl-tRNA.EF-Tu.GTP complex up to the GTP hydrolysis stage on the ribosome.</text>
</comment>
<comment type="subcellular location">
    <subcellularLocation>
        <location evidence="1">Cytoplasm</location>
    </subcellularLocation>
</comment>
<comment type="similarity">
    <text evidence="1">Belongs to the EF-Ts family.</text>
</comment>
<organism>
    <name type="scientific">Saccharophagus degradans (strain 2-40 / ATCC 43961 / DSM 17024)</name>
    <dbReference type="NCBI Taxonomy" id="203122"/>
    <lineage>
        <taxon>Bacteria</taxon>
        <taxon>Pseudomonadati</taxon>
        <taxon>Pseudomonadota</taxon>
        <taxon>Gammaproteobacteria</taxon>
        <taxon>Cellvibrionales</taxon>
        <taxon>Cellvibrionaceae</taxon>
        <taxon>Saccharophagus</taxon>
    </lineage>
</organism>
<keyword id="KW-0963">Cytoplasm</keyword>
<keyword id="KW-0251">Elongation factor</keyword>
<keyword id="KW-0648">Protein biosynthesis</keyword>
<keyword id="KW-1185">Reference proteome</keyword>
<protein>
    <recommendedName>
        <fullName evidence="1">Elongation factor Ts</fullName>
        <shortName evidence="1">EF-Ts</shortName>
    </recommendedName>
</protein>
<evidence type="ECO:0000255" key="1">
    <source>
        <dbReference type="HAMAP-Rule" id="MF_00050"/>
    </source>
</evidence>
<feature type="chain" id="PRO_0000241523" description="Elongation factor Ts">
    <location>
        <begin position="1"/>
        <end position="290"/>
    </location>
</feature>
<feature type="region of interest" description="Involved in Mg(2+) ion dislocation from EF-Tu" evidence="1">
    <location>
        <begin position="81"/>
        <end position="84"/>
    </location>
</feature>
<sequence>MAVSASLVKELRERTGLGMMECKKALVETDGDIDVAIENLRKASGLKAAKKADRTAAEGVVAVKVAEDGSYGVMVEVNSETDFVARDAGFLAFVDTVVNKAFDTKATDVAALAGDEIESTRQALVQKIGENIGVRRVQLIEAGSGVVGAYLHSNNRIAVLTQLTAGDVELARDIAMHVAAVNPQVVNSADMPAEVVEKEKEIIKAQPDMEGKPAEIVDKMMVGRINKFLKENSLVDQPFVKNPEVTVGKLAKDAGAEVVGFVRFEVGEGIEKVEEDFAAEVAAQVAASKA</sequence>
<gene>
    <name evidence="1" type="primary">tsf</name>
    <name type="ordered locus">Sde_2596</name>
</gene>
<dbReference type="EMBL" id="CP000282">
    <property type="protein sequence ID" value="ABD81856.1"/>
    <property type="molecule type" value="Genomic_DNA"/>
</dbReference>
<dbReference type="RefSeq" id="WP_011469073.1">
    <property type="nucleotide sequence ID" value="NC_007912.1"/>
</dbReference>
<dbReference type="SMR" id="Q21HH3"/>
<dbReference type="STRING" id="203122.Sde_2596"/>
<dbReference type="GeneID" id="98614259"/>
<dbReference type="KEGG" id="sde:Sde_2596"/>
<dbReference type="eggNOG" id="COG0264">
    <property type="taxonomic scope" value="Bacteria"/>
</dbReference>
<dbReference type="HOGENOM" id="CLU_047155_0_2_6"/>
<dbReference type="OrthoDB" id="9808348at2"/>
<dbReference type="Proteomes" id="UP000001947">
    <property type="component" value="Chromosome"/>
</dbReference>
<dbReference type="GO" id="GO:0005737">
    <property type="term" value="C:cytoplasm"/>
    <property type="evidence" value="ECO:0007669"/>
    <property type="project" value="UniProtKB-SubCell"/>
</dbReference>
<dbReference type="GO" id="GO:0003746">
    <property type="term" value="F:translation elongation factor activity"/>
    <property type="evidence" value="ECO:0007669"/>
    <property type="project" value="UniProtKB-UniRule"/>
</dbReference>
<dbReference type="CDD" id="cd14275">
    <property type="entry name" value="UBA_EF-Ts"/>
    <property type="match status" value="1"/>
</dbReference>
<dbReference type="FunFam" id="1.10.286.20:FF:000001">
    <property type="entry name" value="Elongation factor Ts"/>
    <property type="match status" value="1"/>
</dbReference>
<dbReference type="FunFam" id="1.10.8.10:FF:000001">
    <property type="entry name" value="Elongation factor Ts"/>
    <property type="match status" value="1"/>
</dbReference>
<dbReference type="FunFam" id="3.30.479.20:FF:000001">
    <property type="entry name" value="Elongation factor Ts"/>
    <property type="match status" value="1"/>
</dbReference>
<dbReference type="Gene3D" id="1.10.286.20">
    <property type="match status" value="1"/>
</dbReference>
<dbReference type="Gene3D" id="1.10.8.10">
    <property type="entry name" value="DNA helicase RuvA subunit, C-terminal domain"/>
    <property type="match status" value="1"/>
</dbReference>
<dbReference type="Gene3D" id="3.30.479.20">
    <property type="entry name" value="Elongation factor Ts, dimerisation domain"/>
    <property type="match status" value="2"/>
</dbReference>
<dbReference type="HAMAP" id="MF_00050">
    <property type="entry name" value="EF_Ts"/>
    <property type="match status" value="1"/>
</dbReference>
<dbReference type="InterPro" id="IPR036402">
    <property type="entry name" value="EF-Ts_dimer_sf"/>
</dbReference>
<dbReference type="InterPro" id="IPR001816">
    <property type="entry name" value="Transl_elong_EFTs/EF1B"/>
</dbReference>
<dbReference type="InterPro" id="IPR014039">
    <property type="entry name" value="Transl_elong_EFTs/EF1B_dimer"/>
</dbReference>
<dbReference type="InterPro" id="IPR018101">
    <property type="entry name" value="Transl_elong_Ts_CS"/>
</dbReference>
<dbReference type="InterPro" id="IPR009060">
    <property type="entry name" value="UBA-like_sf"/>
</dbReference>
<dbReference type="NCBIfam" id="TIGR00116">
    <property type="entry name" value="tsf"/>
    <property type="match status" value="1"/>
</dbReference>
<dbReference type="PANTHER" id="PTHR11741">
    <property type="entry name" value="ELONGATION FACTOR TS"/>
    <property type="match status" value="1"/>
</dbReference>
<dbReference type="PANTHER" id="PTHR11741:SF0">
    <property type="entry name" value="ELONGATION FACTOR TS, MITOCHONDRIAL"/>
    <property type="match status" value="1"/>
</dbReference>
<dbReference type="Pfam" id="PF00889">
    <property type="entry name" value="EF_TS"/>
    <property type="match status" value="1"/>
</dbReference>
<dbReference type="SUPFAM" id="SSF54713">
    <property type="entry name" value="Elongation factor Ts (EF-Ts), dimerisation domain"/>
    <property type="match status" value="2"/>
</dbReference>
<dbReference type="SUPFAM" id="SSF46934">
    <property type="entry name" value="UBA-like"/>
    <property type="match status" value="1"/>
</dbReference>
<dbReference type="PROSITE" id="PS01126">
    <property type="entry name" value="EF_TS_1"/>
    <property type="match status" value="1"/>
</dbReference>
<dbReference type="PROSITE" id="PS01127">
    <property type="entry name" value="EF_TS_2"/>
    <property type="match status" value="1"/>
</dbReference>
<accession>Q21HH3</accession>